<name>ADHB_MYCTU</name>
<reference key="1">
    <citation type="journal article" date="1998" name="Nature">
        <title>Deciphering the biology of Mycobacterium tuberculosis from the complete genome sequence.</title>
        <authorList>
            <person name="Cole S.T."/>
            <person name="Brosch R."/>
            <person name="Parkhill J."/>
            <person name="Garnier T."/>
            <person name="Churcher C.M."/>
            <person name="Harris D.E."/>
            <person name="Gordon S.V."/>
            <person name="Eiglmeier K."/>
            <person name="Gas S."/>
            <person name="Barry C.E. III"/>
            <person name="Tekaia F."/>
            <person name="Badcock K."/>
            <person name="Basham D."/>
            <person name="Brown D."/>
            <person name="Chillingworth T."/>
            <person name="Connor R."/>
            <person name="Davies R.M."/>
            <person name="Devlin K."/>
            <person name="Feltwell T."/>
            <person name="Gentles S."/>
            <person name="Hamlin N."/>
            <person name="Holroyd S."/>
            <person name="Hornsby T."/>
            <person name="Jagels K."/>
            <person name="Krogh A."/>
            <person name="McLean J."/>
            <person name="Moule S."/>
            <person name="Murphy L.D."/>
            <person name="Oliver S."/>
            <person name="Osborne J."/>
            <person name="Quail M.A."/>
            <person name="Rajandream M.A."/>
            <person name="Rogers J."/>
            <person name="Rutter S."/>
            <person name="Seeger K."/>
            <person name="Skelton S."/>
            <person name="Squares S."/>
            <person name="Squares R."/>
            <person name="Sulston J.E."/>
            <person name="Taylor K."/>
            <person name="Whitehead S."/>
            <person name="Barrell B.G."/>
        </authorList>
    </citation>
    <scope>NUCLEOTIDE SEQUENCE [LARGE SCALE GENOMIC DNA]</scope>
    <source>
        <strain>ATCC 25618 / H37Rv</strain>
    </source>
</reference>
<reference key="2">
    <citation type="journal article" date="2011" name="Mol. Cell. Proteomics">
        <title>Proteogenomic analysis of Mycobacterium tuberculosis by high resolution mass spectrometry.</title>
        <authorList>
            <person name="Kelkar D.S."/>
            <person name="Kumar D."/>
            <person name="Kumar P."/>
            <person name="Balakrishnan L."/>
            <person name="Muthusamy B."/>
            <person name="Yadav A.K."/>
            <person name="Shrivastava P."/>
            <person name="Marimuthu A."/>
            <person name="Anand S."/>
            <person name="Sundaram H."/>
            <person name="Kingsbury R."/>
            <person name="Harsha H.C."/>
            <person name="Nair B."/>
            <person name="Prasad T.S."/>
            <person name="Chauhan D.S."/>
            <person name="Katoch K."/>
            <person name="Katoch V.M."/>
            <person name="Kumar P."/>
            <person name="Chaerkady R."/>
            <person name="Ramachandran S."/>
            <person name="Dash D."/>
            <person name="Pandey A."/>
        </authorList>
    </citation>
    <scope>IDENTIFICATION BY MASS SPECTROMETRY [LARGE SCALE ANALYSIS]</scope>
    <source>
        <strain>ATCC 25618 / H37Rv</strain>
    </source>
</reference>
<protein>
    <recommendedName>
        <fullName>Alcohol dehydrogenase B</fullName>
        <ecNumber>1.1.1.1</ecNumber>
    </recommendedName>
</protein>
<dbReference type="EC" id="1.1.1.1"/>
<dbReference type="EMBL" id="AL123456">
    <property type="protein sequence ID" value="CCP43508.1"/>
    <property type="molecule type" value="Genomic_DNA"/>
</dbReference>
<dbReference type="PIR" id="D70706">
    <property type="entry name" value="D70706"/>
</dbReference>
<dbReference type="RefSeq" id="WP_003403885.1">
    <property type="nucleotide sequence ID" value="NZ_NVQJ01000035.1"/>
</dbReference>
<dbReference type="RefSeq" id="YP_177754.1">
    <property type="nucleotide sequence ID" value="NC_000962.3"/>
</dbReference>
<dbReference type="SMR" id="P9WQC7"/>
<dbReference type="FunCoup" id="P9WQC7">
    <property type="interactions" value="404"/>
</dbReference>
<dbReference type="STRING" id="83332.Rv0761c"/>
<dbReference type="PaxDb" id="83332-Rv0761c"/>
<dbReference type="DNASU" id="888738"/>
<dbReference type="GeneID" id="888738"/>
<dbReference type="KEGG" id="mtu:Rv0761c"/>
<dbReference type="KEGG" id="mtv:RVBD_0761c"/>
<dbReference type="TubercuList" id="Rv0761c"/>
<dbReference type="eggNOG" id="COG1062">
    <property type="taxonomic scope" value="Bacteria"/>
</dbReference>
<dbReference type="InParanoid" id="P9WQC7"/>
<dbReference type="OrthoDB" id="334894at2"/>
<dbReference type="PhylomeDB" id="P9WQC7"/>
<dbReference type="Proteomes" id="UP000001584">
    <property type="component" value="Chromosome"/>
</dbReference>
<dbReference type="GO" id="GO:0005829">
    <property type="term" value="C:cytosol"/>
    <property type="evidence" value="ECO:0000318"/>
    <property type="project" value="GO_Central"/>
</dbReference>
<dbReference type="GO" id="GO:0005886">
    <property type="term" value="C:plasma membrane"/>
    <property type="evidence" value="ECO:0007005"/>
    <property type="project" value="MTBBASE"/>
</dbReference>
<dbReference type="GO" id="GO:0004022">
    <property type="term" value="F:alcohol dehydrogenase (NAD+) activity"/>
    <property type="evidence" value="ECO:0000318"/>
    <property type="project" value="GO_Central"/>
</dbReference>
<dbReference type="GO" id="GO:0051903">
    <property type="term" value="F:S-(hydroxymethyl)glutathione dehydrogenase [NAD(P)+] activity"/>
    <property type="evidence" value="ECO:0000318"/>
    <property type="project" value="GO_Central"/>
</dbReference>
<dbReference type="GO" id="GO:0008270">
    <property type="term" value="F:zinc ion binding"/>
    <property type="evidence" value="ECO:0000318"/>
    <property type="project" value="GO_Central"/>
</dbReference>
<dbReference type="GO" id="GO:0046294">
    <property type="term" value="P:formaldehyde catabolic process"/>
    <property type="evidence" value="ECO:0000318"/>
    <property type="project" value="GO_Central"/>
</dbReference>
<dbReference type="CDD" id="cd08279">
    <property type="entry name" value="Zn_ADH_class_III"/>
    <property type="match status" value="1"/>
</dbReference>
<dbReference type="Gene3D" id="3.90.180.10">
    <property type="entry name" value="Medium-chain alcohol dehydrogenases, catalytic domain"/>
    <property type="match status" value="1"/>
</dbReference>
<dbReference type="Gene3D" id="3.40.50.720">
    <property type="entry name" value="NAD(P)-binding Rossmann-like Domain"/>
    <property type="match status" value="1"/>
</dbReference>
<dbReference type="InterPro" id="IPR013149">
    <property type="entry name" value="ADH-like_C"/>
</dbReference>
<dbReference type="InterPro" id="IPR013154">
    <property type="entry name" value="ADH-like_N"/>
</dbReference>
<dbReference type="InterPro" id="IPR023921">
    <property type="entry name" value="ADH_Zn_actinomycetes"/>
</dbReference>
<dbReference type="InterPro" id="IPR002328">
    <property type="entry name" value="ADH_Zn_CS"/>
</dbReference>
<dbReference type="InterPro" id="IPR011032">
    <property type="entry name" value="GroES-like_sf"/>
</dbReference>
<dbReference type="InterPro" id="IPR036291">
    <property type="entry name" value="NAD(P)-bd_dom_sf"/>
</dbReference>
<dbReference type="InterPro" id="IPR020843">
    <property type="entry name" value="PKS_ER"/>
</dbReference>
<dbReference type="NCBIfam" id="TIGR03989">
    <property type="entry name" value="Rxyl_3153"/>
    <property type="match status" value="1"/>
</dbReference>
<dbReference type="PANTHER" id="PTHR43880">
    <property type="entry name" value="ALCOHOL DEHYDROGENASE"/>
    <property type="match status" value="1"/>
</dbReference>
<dbReference type="PANTHER" id="PTHR43880:SF12">
    <property type="entry name" value="ALCOHOL DEHYDROGENASE CLASS-3"/>
    <property type="match status" value="1"/>
</dbReference>
<dbReference type="Pfam" id="PF08240">
    <property type="entry name" value="ADH_N"/>
    <property type="match status" value="1"/>
</dbReference>
<dbReference type="Pfam" id="PF00107">
    <property type="entry name" value="ADH_zinc_N"/>
    <property type="match status" value="1"/>
</dbReference>
<dbReference type="SMART" id="SM00829">
    <property type="entry name" value="PKS_ER"/>
    <property type="match status" value="1"/>
</dbReference>
<dbReference type="SUPFAM" id="SSF50129">
    <property type="entry name" value="GroES-like"/>
    <property type="match status" value="2"/>
</dbReference>
<dbReference type="SUPFAM" id="SSF51735">
    <property type="entry name" value="NAD(P)-binding Rossmann-fold domains"/>
    <property type="match status" value="1"/>
</dbReference>
<dbReference type="PROSITE" id="PS00059">
    <property type="entry name" value="ADH_ZINC"/>
    <property type="match status" value="1"/>
</dbReference>
<keyword id="KW-0963">Cytoplasm</keyword>
<keyword id="KW-0479">Metal-binding</keyword>
<keyword id="KW-0520">NAD</keyword>
<keyword id="KW-0560">Oxidoreductase</keyword>
<keyword id="KW-1185">Reference proteome</keyword>
<keyword id="KW-0862">Zinc</keyword>
<accession>P9WQC7</accession>
<accession>L0T7F0</accession>
<accession>P71818</accession>
<evidence type="ECO:0000250" key="1"/>
<evidence type="ECO:0000305" key="2"/>
<organism>
    <name type="scientific">Mycobacterium tuberculosis (strain ATCC 25618 / H37Rv)</name>
    <dbReference type="NCBI Taxonomy" id="83332"/>
    <lineage>
        <taxon>Bacteria</taxon>
        <taxon>Bacillati</taxon>
        <taxon>Actinomycetota</taxon>
        <taxon>Actinomycetes</taxon>
        <taxon>Mycobacteriales</taxon>
        <taxon>Mycobacteriaceae</taxon>
        <taxon>Mycobacterium</taxon>
        <taxon>Mycobacterium tuberculosis complex</taxon>
    </lineage>
</organism>
<sequence length="375" mass="39748">MKTKGALIWEFNQPWSVEEIEIGDPRKDEVKIQMEAAGMCRSDHHLVTGDIPMAGFPVLGGHEGAGIVTEVGPGVDDFAPGDHVVLAFIPSCGKCPSCQAGMRNLCDLGAGLLAGESVTDGSFRIQARGQNVYPMTLLGTFSPYMVVHRSSVVKIDPSVPFEVACLVGCGVTTGYGSAVRTADVRPGDDVAIVGLGGVGMAALQGAVSAGARYVFAVEPVEWKRDQALKFGATHVYPDINAALMGIAEVTYGLMAQKVIITVGKLDGADVDSYLTITAKGGTCVLTAIGSLVDTQVTLNLAMLTLLQKNIQGTIFGGGNPHYDIPKLLSMYKAGKLNLDDMVTTAYKLEQINDGYQDMLNGKNIRGVIRYTDDDR</sequence>
<comment type="catalytic activity">
    <reaction>
        <text>a primary alcohol + NAD(+) = an aldehyde + NADH + H(+)</text>
        <dbReference type="Rhea" id="RHEA:10736"/>
        <dbReference type="ChEBI" id="CHEBI:15378"/>
        <dbReference type="ChEBI" id="CHEBI:15734"/>
        <dbReference type="ChEBI" id="CHEBI:17478"/>
        <dbReference type="ChEBI" id="CHEBI:57540"/>
        <dbReference type="ChEBI" id="CHEBI:57945"/>
        <dbReference type="EC" id="1.1.1.1"/>
    </reaction>
</comment>
<comment type="catalytic activity">
    <reaction>
        <text>a secondary alcohol + NAD(+) = a ketone + NADH + H(+)</text>
        <dbReference type="Rhea" id="RHEA:10740"/>
        <dbReference type="ChEBI" id="CHEBI:15378"/>
        <dbReference type="ChEBI" id="CHEBI:17087"/>
        <dbReference type="ChEBI" id="CHEBI:35681"/>
        <dbReference type="ChEBI" id="CHEBI:57540"/>
        <dbReference type="ChEBI" id="CHEBI:57945"/>
        <dbReference type="EC" id="1.1.1.1"/>
    </reaction>
</comment>
<comment type="cofactor">
    <cofactor evidence="1">
        <name>Zn(2+)</name>
        <dbReference type="ChEBI" id="CHEBI:29105"/>
    </cofactor>
    <text evidence="1">Binds 2 Zn(2+) ions per subunit.</text>
</comment>
<comment type="subcellular location">
    <subcellularLocation>
        <location evidence="1">Cytoplasm</location>
    </subcellularLocation>
</comment>
<comment type="similarity">
    <text evidence="2">Belongs to the zinc-containing alcohol dehydrogenase family.</text>
</comment>
<gene>
    <name type="primary">adhB</name>
    <name type="ordered locus">Rv0761c</name>
    <name type="ORF">MTCY369.06c</name>
</gene>
<proteinExistence type="evidence at protein level"/>
<feature type="chain" id="PRO_0000160743" description="Alcohol dehydrogenase B">
    <location>
        <begin position="1"/>
        <end position="375"/>
    </location>
</feature>
<feature type="binding site" evidence="1">
    <location>
        <position position="40"/>
    </location>
    <ligand>
        <name>Zn(2+)</name>
        <dbReference type="ChEBI" id="CHEBI:29105"/>
        <label>1</label>
        <note>catalytic</note>
    </ligand>
</feature>
<feature type="binding site" evidence="1">
    <location>
        <position position="62"/>
    </location>
    <ligand>
        <name>Zn(2+)</name>
        <dbReference type="ChEBI" id="CHEBI:29105"/>
        <label>1</label>
        <note>catalytic</note>
    </ligand>
</feature>
<feature type="binding site" evidence="1">
    <location>
        <position position="92"/>
    </location>
    <ligand>
        <name>Zn(2+)</name>
        <dbReference type="ChEBI" id="CHEBI:29105"/>
        <label>2</label>
    </ligand>
</feature>
<feature type="binding site" evidence="1">
    <location>
        <position position="95"/>
    </location>
    <ligand>
        <name>Zn(2+)</name>
        <dbReference type="ChEBI" id="CHEBI:29105"/>
        <label>2</label>
    </ligand>
</feature>
<feature type="binding site" evidence="1">
    <location>
        <position position="98"/>
    </location>
    <ligand>
        <name>Zn(2+)</name>
        <dbReference type="ChEBI" id="CHEBI:29105"/>
        <label>2</label>
    </ligand>
</feature>
<feature type="binding site" evidence="1">
    <location>
        <position position="106"/>
    </location>
    <ligand>
        <name>Zn(2+)</name>
        <dbReference type="ChEBI" id="CHEBI:29105"/>
        <label>2</label>
    </ligand>
</feature>
<feature type="binding site" evidence="1">
    <location>
        <position position="169"/>
    </location>
    <ligand>
        <name>Zn(2+)</name>
        <dbReference type="ChEBI" id="CHEBI:29105"/>
        <label>1</label>
        <note>catalytic</note>
    </ligand>
</feature>